<sequence length="433" mass="46766">MSTVPTDHGVAALGEFVFECGQSVPDLEVAYETHGEFDGDNVVLVCHALTGSQNVARSPAPERNEGTRGAGQAGQARAWWDDIVGPGKAIDTTKYYVVCANVPGSCYGTTGPASERPADLDLPEEPDHDRWGTAFPPVQVEDWARSQRRLLDHLGVGRLRAVVGGSVGGMNVLEWAKRYPDDVDRVVAIATAGRLDAQCLALDAVARRAIRADPNWNGGNYYGEGRPSPDEGLALARQIGHIMYLSKASMERKFGRRSAGRDSLTREEGDLGLPPEPTAAFFPYREVESYLDYQAEGFSERFDANSYLYLTRAMDEYDLSAGHGTDADALAAFEGEALLMSFTADWHFTVEQSSSLAAAFRDRDVPVAHHVIDSDHGHDAFLVEPEHVGPPLRDFLVEGVGGRAVSDDGGGGGNDSARPERDHAPVHASLFKG</sequence>
<accession>B9LTF0</accession>
<reference key="1">
    <citation type="journal article" date="2016" name="Stand. Genomic Sci.">
        <title>Complete genome sequence of the Antarctic Halorubrum lacusprofundi type strain ACAM 34.</title>
        <authorList>
            <person name="Anderson I.J."/>
            <person name="DasSarma P."/>
            <person name="Lucas S."/>
            <person name="Copeland A."/>
            <person name="Lapidus A."/>
            <person name="Del Rio T.G."/>
            <person name="Tice H."/>
            <person name="Dalin E."/>
            <person name="Bruce D.C."/>
            <person name="Goodwin L."/>
            <person name="Pitluck S."/>
            <person name="Sims D."/>
            <person name="Brettin T.S."/>
            <person name="Detter J.C."/>
            <person name="Han C.S."/>
            <person name="Larimer F."/>
            <person name="Hauser L."/>
            <person name="Land M."/>
            <person name="Ivanova N."/>
            <person name="Richardson P."/>
            <person name="Cavicchioli R."/>
            <person name="DasSarma S."/>
            <person name="Woese C.R."/>
            <person name="Kyrpides N.C."/>
        </authorList>
    </citation>
    <scope>NUCLEOTIDE SEQUENCE [LARGE SCALE GENOMIC DNA]</scope>
    <source>
        <strain>ATCC 49239 / DSM 5036 / JCM 8891 / ACAM 34</strain>
    </source>
</reference>
<reference key="2">
    <citation type="journal article" date="2017" name="Nat. Chem. Biol.">
        <title>Parallel evolution of non-homologous isofunctional enzymes in methionine biosynthesis.</title>
        <authorList>
            <person name="Bastard K."/>
            <person name="Perret A."/>
            <person name="Mariage A."/>
            <person name="Bessonnet T."/>
            <person name="Pinet-Turpault A."/>
            <person name="Petit J.L."/>
            <person name="Darii E."/>
            <person name="Bazire P."/>
            <person name="Vergne-Vaxelaire C."/>
            <person name="Brewee C."/>
            <person name="Debard A."/>
            <person name="Pellouin V."/>
            <person name="Besnard-Gonnet M."/>
            <person name="Artiguenave F."/>
            <person name="Medigue C."/>
            <person name="Vallenet D."/>
            <person name="Danchin A."/>
            <person name="Zaparucha A."/>
            <person name="Weissenbach J."/>
            <person name="Salanoubat M."/>
            <person name="de Berardinis V."/>
        </authorList>
    </citation>
    <scope>FUNCTION</scope>
    <scope>CATALYTIC ACTIVITY</scope>
</reference>
<dbReference type="EC" id="2.3.1.31" evidence="1 3"/>
<dbReference type="EMBL" id="CP001365">
    <property type="protein sequence ID" value="ACM58122.1"/>
    <property type="molecule type" value="Genomic_DNA"/>
</dbReference>
<dbReference type="RefSeq" id="WP_015911234.1">
    <property type="nucleotide sequence ID" value="NC_012029.1"/>
</dbReference>
<dbReference type="SMR" id="B9LTF0"/>
<dbReference type="ESTHER" id="hallt-metxa">
    <property type="family name" value="Homoserine_transacetylase"/>
</dbReference>
<dbReference type="GeneID" id="7399775"/>
<dbReference type="KEGG" id="hla:Hlac_2550"/>
<dbReference type="eggNOG" id="arCOG00627">
    <property type="taxonomic scope" value="Archaea"/>
</dbReference>
<dbReference type="HOGENOM" id="CLU_028760_1_2_2"/>
<dbReference type="UniPathway" id="UPA00051">
    <property type="reaction ID" value="UER00074"/>
</dbReference>
<dbReference type="Proteomes" id="UP000000740">
    <property type="component" value="Chromosome 1"/>
</dbReference>
<dbReference type="GO" id="GO:0005737">
    <property type="term" value="C:cytoplasm"/>
    <property type="evidence" value="ECO:0007669"/>
    <property type="project" value="UniProtKB-SubCell"/>
</dbReference>
<dbReference type="GO" id="GO:0004414">
    <property type="term" value="F:homoserine O-acetyltransferase activity"/>
    <property type="evidence" value="ECO:0007669"/>
    <property type="project" value="UniProtKB-UniRule"/>
</dbReference>
<dbReference type="GO" id="GO:0009092">
    <property type="term" value="P:homoserine metabolic process"/>
    <property type="evidence" value="ECO:0007669"/>
    <property type="project" value="TreeGrafter"/>
</dbReference>
<dbReference type="GO" id="GO:0009086">
    <property type="term" value="P:methionine biosynthetic process"/>
    <property type="evidence" value="ECO:0007669"/>
    <property type="project" value="UniProtKB-UniRule"/>
</dbReference>
<dbReference type="Gene3D" id="3.40.50.1820">
    <property type="entry name" value="alpha/beta hydrolase"/>
    <property type="match status" value="1"/>
</dbReference>
<dbReference type="HAMAP" id="MF_00296">
    <property type="entry name" value="MetX_acyltransf"/>
    <property type="match status" value="1"/>
</dbReference>
<dbReference type="InterPro" id="IPR000073">
    <property type="entry name" value="AB_hydrolase_1"/>
</dbReference>
<dbReference type="InterPro" id="IPR029058">
    <property type="entry name" value="AB_hydrolase_fold"/>
</dbReference>
<dbReference type="InterPro" id="IPR008220">
    <property type="entry name" value="HAT_MetX-like"/>
</dbReference>
<dbReference type="NCBIfam" id="TIGR01392">
    <property type="entry name" value="homoserO_Ac_trn"/>
    <property type="match status" value="1"/>
</dbReference>
<dbReference type="NCBIfam" id="NF001209">
    <property type="entry name" value="PRK00175.1"/>
    <property type="match status" value="1"/>
</dbReference>
<dbReference type="PANTHER" id="PTHR32268">
    <property type="entry name" value="HOMOSERINE O-ACETYLTRANSFERASE"/>
    <property type="match status" value="1"/>
</dbReference>
<dbReference type="PANTHER" id="PTHR32268:SF11">
    <property type="entry name" value="HOMOSERINE O-ACETYLTRANSFERASE"/>
    <property type="match status" value="1"/>
</dbReference>
<dbReference type="Pfam" id="PF00561">
    <property type="entry name" value="Abhydrolase_1"/>
    <property type="match status" value="1"/>
</dbReference>
<dbReference type="PIRSF" id="PIRSF000443">
    <property type="entry name" value="Homoser_Ac_trans"/>
    <property type="match status" value="1"/>
</dbReference>
<dbReference type="SUPFAM" id="SSF53474">
    <property type="entry name" value="alpha/beta-Hydrolases"/>
    <property type="match status" value="1"/>
</dbReference>
<comment type="function">
    <text evidence="1 3">Transfers an acetyl group from acetyl-CoA to L-homoserine, forming acetyl-L-homoserine.</text>
</comment>
<comment type="catalytic activity">
    <reaction evidence="1 3">
        <text>L-homoserine + acetyl-CoA = O-acetyl-L-homoserine + CoA</text>
        <dbReference type="Rhea" id="RHEA:13701"/>
        <dbReference type="ChEBI" id="CHEBI:57287"/>
        <dbReference type="ChEBI" id="CHEBI:57288"/>
        <dbReference type="ChEBI" id="CHEBI:57476"/>
        <dbReference type="ChEBI" id="CHEBI:57716"/>
        <dbReference type="EC" id="2.3.1.31"/>
    </reaction>
</comment>
<comment type="pathway">
    <text evidence="1">Amino-acid biosynthesis; L-methionine biosynthesis via de novo pathway; O-acetyl-L-homoserine from L-homoserine: step 1/1.</text>
</comment>
<comment type="subunit">
    <text evidence="1">Homodimer.</text>
</comment>
<comment type="subcellular location">
    <subcellularLocation>
        <location evidence="1">Cytoplasm</location>
    </subcellularLocation>
</comment>
<comment type="similarity">
    <text evidence="1">Belongs to the AB hydrolase superfamily. MetX family.</text>
</comment>
<protein>
    <recommendedName>
        <fullName evidence="1">Homoserine O-acetyltransferase</fullName>
        <shortName evidence="1 4">HAT</shortName>
        <ecNumber evidence="1 3">2.3.1.31</ecNumber>
    </recommendedName>
    <alternativeName>
        <fullName evidence="1">Homoserine transacetylase</fullName>
        <shortName evidence="1">HTA</shortName>
    </alternativeName>
</protein>
<evidence type="ECO:0000255" key="1">
    <source>
        <dbReference type="HAMAP-Rule" id="MF_00296"/>
    </source>
</evidence>
<evidence type="ECO:0000256" key="2">
    <source>
        <dbReference type="SAM" id="MobiDB-lite"/>
    </source>
</evidence>
<evidence type="ECO:0000269" key="3">
    <source>
    </source>
</evidence>
<evidence type="ECO:0000303" key="4">
    <source>
    </source>
</evidence>
<evidence type="ECO:0000312" key="5">
    <source>
        <dbReference type="EMBL" id="ACM58122.1"/>
    </source>
</evidence>
<proteinExistence type="evidence at protein level"/>
<keyword id="KW-0012">Acyltransferase</keyword>
<keyword id="KW-0028">Amino-acid biosynthesis</keyword>
<keyword id="KW-0963">Cytoplasm</keyword>
<keyword id="KW-0486">Methionine biosynthesis</keyword>
<keyword id="KW-1185">Reference proteome</keyword>
<keyword id="KW-0808">Transferase</keyword>
<organism>
    <name type="scientific">Halorubrum lacusprofundi (strain ATCC 49239 / DSM 5036 / JCM 8891 / ACAM 34)</name>
    <dbReference type="NCBI Taxonomy" id="416348"/>
    <lineage>
        <taxon>Archaea</taxon>
        <taxon>Methanobacteriati</taxon>
        <taxon>Methanobacteriota</taxon>
        <taxon>Stenosarchaea group</taxon>
        <taxon>Halobacteria</taxon>
        <taxon>Halobacteriales</taxon>
        <taxon>Haloferacaceae</taxon>
        <taxon>Halorubrum</taxon>
    </lineage>
</organism>
<gene>
    <name evidence="1 4" type="primary">metXA</name>
    <name evidence="5" type="ordered locus">Hlac_2550</name>
</gene>
<feature type="chain" id="PRO_0000440282" description="Homoserine O-acetyltransferase">
    <location>
        <begin position="1"/>
        <end position="433"/>
    </location>
</feature>
<feature type="domain" description="AB hydrolase-1" evidence="1">
    <location>
        <begin position="41"/>
        <end position="385"/>
    </location>
</feature>
<feature type="region of interest" description="Disordered" evidence="2">
    <location>
        <begin position="55"/>
        <end position="74"/>
    </location>
</feature>
<feature type="region of interest" description="Disordered" evidence="2">
    <location>
        <begin position="403"/>
        <end position="433"/>
    </location>
</feature>
<feature type="active site" description="Nucleophile" evidence="1">
    <location>
        <position position="166"/>
    </location>
</feature>
<feature type="active site" evidence="1">
    <location>
        <position position="345"/>
    </location>
</feature>
<feature type="active site" evidence="1">
    <location>
        <position position="378"/>
    </location>
</feature>
<feature type="binding site" evidence="1">
    <location>
        <position position="237"/>
    </location>
    <ligand>
        <name>substrate</name>
    </ligand>
</feature>
<feature type="binding site" evidence="1">
    <location>
        <position position="379"/>
    </location>
    <ligand>
        <name>substrate</name>
    </ligand>
</feature>
<name>METXA_HALLT</name>